<accession>Q12259</accession>
<accession>D6VYA8</accession>
<comment type="subcellular location">
    <subcellularLocation>
        <location evidence="1">Nucleus</location>
    </subcellularLocation>
</comment>
<comment type="miscellaneous">
    <text evidence="2">Present with 189 molecules/cell in log phase SD medium.</text>
</comment>
<gene>
    <name type="ordered locus">YLR108C</name>
    <name type="ORF">L2913</name>
</gene>
<feature type="chain" id="PRO_0000247339" description="BTB/POZ domain-containing protein YLR108C">
    <location>
        <begin position="1"/>
        <end position="485"/>
    </location>
</feature>
<feature type="domain" description="BTB">
    <location>
        <begin position="26"/>
        <end position="121"/>
    </location>
</feature>
<evidence type="ECO:0000269" key="1">
    <source>
    </source>
</evidence>
<evidence type="ECO:0000269" key="2">
    <source>
    </source>
</evidence>
<reference key="1">
    <citation type="journal article" date="1997" name="Yeast">
        <title>Sequence analysis of a 37.6 kbp cosmid clone from the right arm of Saccharomyces cerevisiae chromosome XII, carrying YAP3, HOG1, SNR6, tRNA-Arg3 and 23 new open reading frames, among which several homologies to proteins involved in cell division control and to mammalian growth factors and other animal proteins are found.</title>
        <authorList>
            <person name="Verhasselt P."/>
            <person name="Volckaert G."/>
        </authorList>
    </citation>
    <scope>NUCLEOTIDE SEQUENCE [GENOMIC DNA]</scope>
    <source>
        <strain>ATCC 90840 / EAY235 / FY23</strain>
    </source>
</reference>
<reference key="2">
    <citation type="journal article" date="1997" name="Nature">
        <title>The nucleotide sequence of Saccharomyces cerevisiae chromosome XII.</title>
        <authorList>
            <person name="Johnston M."/>
            <person name="Hillier L.W."/>
            <person name="Riles L."/>
            <person name="Albermann K."/>
            <person name="Andre B."/>
            <person name="Ansorge W."/>
            <person name="Benes V."/>
            <person name="Brueckner M."/>
            <person name="Delius H."/>
            <person name="Dubois E."/>
            <person name="Duesterhoeft A."/>
            <person name="Entian K.-D."/>
            <person name="Floeth M."/>
            <person name="Goffeau A."/>
            <person name="Hebling U."/>
            <person name="Heumann K."/>
            <person name="Heuss-Neitzel D."/>
            <person name="Hilbert H."/>
            <person name="Hilger F."/>
            <person name="Kleine K."/>
            <person name="Koetter P."/>
            <person name="Louis E.J."/>
            <person name="Messenguy F."/>
            <person name="Mewes H.-W."/>
            <person name="Miosga T."/>
            <person name="Moestl D."/>
            <person name="Mueller-Auer S."/>
            <person name="Nentwich U."/>
            <person name="Obermaier B."/>
            <person name="Piravandi E."/>
            <person name="Pohl T.M."/>
            <person name="Portetelle D."/>
            <person name="Purnelle B."/>
            <person name="Rechmann S."/>
            <person name="Rieger M."/>
            <person name="Rinke M."/>
            <person name="Rose M."/>
            <person name="Scharfe M."/>
            <person name="Scherens B."/>
            <person name="Scholler P."/>
            <person name="Schwager C."/>
            <person name="Schwarz S."/>
            <person name="Underwood A.P."/>
            <person name="Urrestarazu L.A."/>
            <person name="Vandenbol M."/>
            <person name="Verhasselt P."/>
            <person name="Vierendeels F."/>
            <person name="Voet M."/>
            <person name="Volckaert G."/>
            <person name="Voss H."/>
            <person name="Wambutt R."/>
            <person name="Wedler E."/>
            <person name="Wedler H."/>
            <person name="Zimmermann F.K."/>
            <person name="Zollner A."/>
            <person name="Hani J."/>
            <person name="Hoheisel J.D."/>
        </authorList>
    </citation>
    <scope>NUCLEOTIDE SEQUENCE [LARGE SCALE GENOMIC DNA]</scope>
    <source>
        <strain>ATCC 204508 / S288c</strain>
    </source>
</reference>
<reference key="3">
    <citation type="journal article" date="2014" name="G3 (Bethesda)">
        <title>The reference genome sequence of Saccharomyces cerevisiae: Then and now.</title>
        <authorList>
            <person name="Engel S.R."/>
            <person name="Dietrich F.S."/>
            <person name="Fisk D.G."/>
            <person name="Binkley G."/>
            <person name="Balakrishnan R."/>
            <person name="Costanzo M.C."/>
            <person name="Dwight S.S."/>
            <person name="Hitz B.C."/>
            <person name="Karra K."/>
            <person name="Nash R.S."/>
            <person name="Weng S."/>
            <person name="Wong E.D."/>
            <person name="Lloyd P."/>
            <person name="Skrzypek M.S."/>
            <person name="Miyasato S.R."/>
            <person name="Simison M."/>
            <person name="Cherry J.M."/>
        </authorList>
    </citation>
    <scope>GENOME REANNOTATION</scope>
    <source>
        <strain>ATCC 204508 / S288c</strain>
    </source>
</reference>
<reference key="4">
    <citation type="journal article" date="2003" name="Nature">
        <title>Global analysis of protein localization in budding yeast.</title>
        <authorList>
            <person name="Huh W.-K."/>
            <person name="Falvo J.V."/>
            <person name="Gerke L.C."/>
            <person name="Carroll A.S."/>
            <person name="Howson R.W."/>
            <person name="Weissman J.S."/>
            <person name="O'Shea E.K."/>
        </authorList>
    </citation>
    <scope>SUBCELLULAR LOCATION [LARGE SCALE ANALYSIS]</scope>
</reference>
<reference key="5">
    <citation type="journal article" date="2003" name="Nature">
        <title>Global analysis of protein expression in yeast.</title>
        <authorList>
            <person name="Ghaemmaghami S."/>
            <person name="Huh W.-K."/>
            <person name="Bower K."/>
            <person name="Howson R.W."/>
            <person name="Belle A."/>
            <person name="Dephoure N."/>
            <person name="O'Shea E.K."/>
            <person name="Weissman J.S."/>
        </authorList>
    </citation>
    <scope>LEVEL OF PROTEIN EXPRESSION [LARGE SCALE ANALYSIS]</scope>
</reference>
<sequence>MSGQKGEIVVYTKELETTPELLPNHEVFKIRIGQKLFEISGATLNSDAPNFFTQFFNTHDKNTILFVDRSEDVFIIIYRHLQGYFPDIKNEVQFTCLFADALYFQLPKLVKLIKEYDYHFTNIGGVPFKVPKSLFHEEGNRLNYFETISRISYEEIEKWESNKKPGFPPLLPPSYIARSPEFFRDILSLLGGSKLELSEERTASLIKECRYYRLNRLEQELVRAKIIYNPLTNCQEVCIALDSVSKKGVTIERLTSLHTGNQSLAVSSCLNGTEGEKAATGFHKTETDSGNNDEYEPPTKKVKHCIERHWSMLKYQRPYIDTVSHDLIFQLHSNQCKIIFNKKNKTVHVDLSREAAVLFENKFSDVLLENPDFKIDLSEYKVKLRDSQMQVESHLIIPACVSICDLTVNGAKCCNIFSLVNDSKCKGRVLDCTNLKVLNCVHGLKLHLSKSMWKLGTNNGRIILVAVKAETFSGTKEYCKMIDFL</sequence>
<dbReference type="EMBL" id="X89514">
    <property type="protein sequence ID" value="CAA61686.1"/>
    <property type="molecule type" value="Genomic_DNA"/>
</dbReference>
<dbReference type="EMBL" id="U53878">
    <property type="protein sequence ID" value="AAB67553.1"/>
    <property type="molecule type" value="Genomic_DNA"/>
</dbReference>
<dbReference type="EMBL" id="Z73280">
    <property type="protein sequence ID" value="CAA97674.1"/>
    <property type="molecule type" value="Genomic_DNA"/>
</dbReference>
<dbReference type="EMBL" id="BK006945">
    <property type="protein sequence ID" value="DAA09424.1"/>
    <property type="molecule type" value="Genomic_DNA"/>
</dbReference>
<dbReference type="PIR" id="S64945">
    <property type="entry name" value="S64945"/>
</dbReference>
<dbReference type="RefSeq" id="NP_013209.1">
    <property type="nucleotide sequence ID" value="NM_001181995.1"/>
</dbReference>
<dbReference type="BioGRID" id="31381">
    <property type="interactions" value="51"/>
</dbReference>
<dbReference type="DIP" id="DIP-4075N"/>
<dbReference type="FunCoup" id="Q12259">
    <property type="interactions" value="84"/>
</dbReference>
<dbReference type="IntAct" id="Q12259">
    <property type="interactions" value="9"/>
</dbReference>
<dbReference type="MINT" id="Q12259"/>
<dbReference type="STRING" id="4932.YLR108C"/>
<dbReference type="iPTMnet" id="Q12259"/>
<dbReference type="PaxDb" id="4932-YLR108C"/>
<dbReference type="PeptideAtlas" id="Q12259"/>
<dbReference type="EnsemblFungi" id="YLR108C_mRNA">
    <property type="protein sequence ID" value="YLR108C"/>
    <property type="gene ID" value="YLR108C"/>
</dbReference>
<dbReference type="GeneID" id="850798"/>
<dbReference type="KEGG" id="sce:YLR108C"/>
<dbReference type="AGR" id="SGD:S000004098"/>
<dbReference type="SGD" id="S000004098">
    <property type="gene designation" value="YLR108C"/>
</dbReference>
<dbReference type="VEuPathDB" id="FungiDB:YLR108C"/>
<dbReference type="eggNOG" id="ENOG502QRM9">
    <property type="taxonomic scope" value="Eukaryota"/>
</dbReference>
<dbReference type="GeneTree" id="ENSGT00940000176731"/>
<dbReference type="HOGENOM" id="CLU_017395_2_1_1"/>
<dbReference type="InParanoid" id="Q12259"/>
<dbReference type="OMA" id="PNFFTRY"/>
<dbReference type="OrthoDB" id="2414723at2759"/>
<dbReference type="BioCyc" id="YEAST:G3O-32256-MONOMER"/>
<dbReference type="BioGRID-ORCS" id="850798">
    <property type="hits" value="0 hits in 10 CRISPR screens"/>
</dbReference>
<dbReference type="PRO" id="PR:Q12259"/>
<dbReference type="Proteomes" id="UP000002311">
    <property type="component" value="Chromosome XII"/>
</dbReference>
<dbReference type="RNAct" id="Q12259">
    <property type="molecule type" value="protein"/>
</dbReference>
<dbReference type="GO" id="GO:0005634">
    <property type="term" value="C:nucleus"/>
    <property type="evidence" value="ECO:0007005"/>
    <property type="project" value="SGD"/>
</dbReference>
<dbReference type="CDD" id="cd18316">
    <property type="entry name" value="BTB_POZ_KCTD-like"/>
    <property type="match status" value="1"/>
</dbReference>
<dbReference type="Gene3D" id="3.30.710.10">
    <property type="entry name" value="Potassium Channel Kv1.1, Chain A"/>
    <property type="match status" value="2"/>
</dbReference>
<dbReference type="InterPro" id="IPR000210">
    <property type="entry name" value="BTB/POZ_dom"/>
</dbReference>
<dbReference type="InterPro" id="IPR011333">
    <property type="entry name" value="SKP1/BTB/POZ_sf"/>
</dbReference>
<dbReference type="PANTHER" id="PTHR31758">
    <property type="entry name" value="BTB/POZ DOMAIN-CONTAINING PROTEIN YLR108C"/>
    <property type="match status" value="1"/>
</dbReference>
<dbReference type="PANTHER" id="PTHR31758:SF2">
    <property type="entry name" value="BTB_POZ DOMAIN-CONTAINING PROTEIN YLR108C"/>
    <property type="match status" value="1"/>
</dbReference>
<dbReference type="SMART" id="SM00225">
    <property type="entry name" value="BTB"/>
    <property type="match status" value="1"/>
</dbReference>
<dbReference type="SUPFAM" id="SSF54695">
    <property type="entry name" value="POZ domain"/>
    <property type="match status" value="2"/>
</dbReference>
<organism>
    <name type="scientific">Saccharomyces cerevisiae (strain ATCC 204508 / S288c)</name>
    <name type="common">Baker's yeast</name>
    <dbReference type="NCBI Taxonomy" id="559292"/>
    <lineage>
        <taxon>Eukaryota</taxon>
        <taxon>Fungi</taxon>
        <taxon>Dikarya</taxon>
        <taxon>Ascomycota</taxon>
        <taxon>Saccharomycotina</taxon>
        <taxon>Saccharomycetes</taxon>
        <taxon>Saccharomycetales</taxon>
        <taxon>Saccharomycetaceae</taxon>
        <taxon>Saccharomyces</taxon>
    </lineage>
</organism>
<protein>
    <recommendedName>
        <fullName>BTB/POZ domain-containing protein YLR108C</fullName>
    </recommendedName>
</protein>
<name>YL108_YEAST</name>
<proteinExistence type="evidence at protein level"/>
<keyword id="KW-0539">Nucleus</keyword>
<keyword id="KW-1185">Reference proteome</keyword>